<evidence type="ECO:0000250" key="1">
    <source>
        <dbReference type="UniProtKB" id="Q86WR6"/>
    </source>
</evidence>
<evidence type="ECO:0000250" key="2">
    <source>
        <dbReference type="UniProtKB" id="Q9D979"/>
    </source>
</evidence>
<evidence type="ECO:0000256" key="3">
    <source>
        <dbReference type="SAM" id="MobiDB-lite"/>
    </source>
</evidence>
<evidence type="ECO:0000305" key="4"/>
<feature type="chain" id="PRO_0000287173" description="CHD1 helical C-terminal domain containing protein 1">
    <location>
        <begin position="1"/>
        <end position="234"/>
    </location>
</feature>
<feature type="region of interest" description="Disordered" evidence="3">
    <location>
        <begin position="1"/>
        <end position="38"/>
    </location>
</feature>
<feature type="region of interest" description="CHD1 helical C-terminal domain (CHCT)" evidence="1">
    <location>
        <begin position="44"/>
        <end position="145"/>
    </location>
</feature>
<feature type="region of interest" description="Disordered" evidence="3">
    <location>
        <begin position="200"/>
        <end position="234"/>
    </location>
</feature>
<protein>
    <recommendedName>
        <fullName>CHD1 helical C-terminal domain containing protein 1</fullName>
    </recommendedName>
    <alternativeName>
        <fullName>Uncharacterized protein C17orf64 homolog</fullName>
    </alternativeName>
</protein>
<gene>
    <name type="primary">CHCT1</name>
</gene>
<dbReference type="EMBL" id="AAFC03050212">
    <property type="status" value="NOT_ANNOTATED_CDS"/>
    <property type="molecule type" value="Genomic_DNA"/>
</dbReference>
<dbReference type="EMBL" id="BC109987">
    <property type="protein sequence ID" value="AAI09988.1"/>
    <property type="status" value="ALT_INIT"/>
    <property type="molecule type" value="mRNA"/>
</dbReference>
<dbReference type="RefSeq" id="NP_001069397.2">
    <property type="nucleotide sequence ID" value="NM_001075929.2"/>
</dbReference>
<dbReference type="SMR" id="Q32KP7"/>
<dbReference type="FunCoup" id="Q32KP7">
    <property type="interactions" value="1"/>
</dbReference>
<dbReference type="STRING" id="9913.ENSBTAP00000047980"/>
<dbReference type="PaxDb" id="9913-ENSBTAP00000047980"/>
<dbReference type="Ensembl" id="ENSBTAT00000054304.3">
    <property type="protein sequence ID" value="ENSBTAP00000047980.2"/>
    <property type="gene ID" value="ENSBTAG00000018391.6"/>
</dbReference>
<dbReference type="GeneID" id="530096"/>
<dbReference type="KEGG" id="bta:530096"/>
<dbReference type="CTD" id="124773"/>
<dbReference type="VEuPathDB" id="HostDB:ENSBTAG00000018391"/>
<dbReference type="VGNC" id="VGNC:52656">
    <property type="gene designation" value="CHCT1"/>
</dbReference>
<dbReference type="eggNOG" id="KOG0384">
    <property type="taxonomic scope" value="Eukaryota"/>
</dbReference>
<dbReference type="GeneTree" id="ENSGT00390000003769"/>
<dbReference type="HOGENOM" id="CLU_095548_0_0_1"/>
<dbReference type="InParanoid" id="Q32KP7"/>
<dbReference type="OMA" id="FLQHCCR"/>
<dbReference type="OrthoDB" id="9388842at2759"/>
<dbReference type="TreeFam" id="TF335849"/>
<dbReference type="Proteomes" id="UP000009136">
    <property type="component" value="Chromosome 19"/>
</dbReference>
<dbReference type="Bgee" id="ENSBTAG00000018391">
    <property type="expression patterns" value="Expressed in spermatid and 8 other cell types or tissues"/>
</dbReference>
<dbReference type="GO" id="GO:0005737">
    <property type="term" value="C:cytoplasm"/>
    <property type="evidence" value="ECO:0007669"/>
    <property type="project" value="UniProtKB-SubCell"/>
</dbReference>
<dbReference type="GO" id="GO:0005634">
    <property type="term" value="C:nucleus"/>
    <property type="evidence" value="ECO:0000250"/>
    <property type="project" value="UniProtKB"/>
</dbReference>
<dbReference type="InterPro" id="IPR039880">
    <property type="entry name" value="CHCT1-like"/>
</dbReference>
<dbReference type="InterPro" id="IPR025260">
    <property type="entry name" value="CHD1-like_C"/>
</dbReference>
<dbReference type="PANTHER" id="PTHR21765:SF1">
    <property type="entry name" value="CHD1 HELICAL C-TERMINAL DOMAIN CONTAINING PROTEIN 1"/>
    <property type="match status" value="1"/>
</dbReference>
<dbReference type="PANTHER" id="PTHR21765">
    <property type="entry name" value="SIMILAR TO CHROMODOMAIN-HELICASE-DNA-BINDING PROTEIN 1 (CHD-1)"/>
    <property type="match status" value="1"/>
</dbReference>
<dbReference type="Pfam" id="PF13907">
    <property type="entry name" value="CHD1-like_C"/>
    <property type="match status" value="1"/>
</dbReference>
<dbReference type="SMART" id="SM01176">
    <property type="entry name" value="DUF4208"/>
    <property type="match status" value="1"/>
</dbReference>
<accession>Q32KP7</accession>
<reference key="1">
    <citation type="journal article" date="2009" name="Science">
        <title>The genome sequence of taurine cattle: a window to ruminant biology and evolution.</title>
        <authorList>
            <consortium name="The bovine genome sequencing and analysis consortium"/>
        </authorList>
    </citation>
    <scope>NUCLEOTIDE SEQUENCE [LARGE SCALE GENOMIC DNA]</scope>
    <source>
        <strain>Hereford</strain>
    </source>
</reference>
<reference key="2">
    <citation type="submission" date="2005-11" db="EMBL/GenBank/DDBJ databases">
        <authorList>
            <consortium name="NIH - Mammalian Gene Collection (MGC) project"/>
        </authorList>
    </citation>
    <scope>NUCLEOTIDE SEQUENCE [LARGE SCALE MRNA] OF 42-234</scope>
    <source>
        <strain>Crossbred X Angus</strain>
        <tissue>Liver</tissue>
    </source>
</reference>
<sequence length="234" mass="27384">MEASDGQADEREEPLEQGTNARSLERRSSTTPAKDSLVRHAKGLDRDTFKICKEYLRPLKKFLRKLHLPKDLPQKKKLKYMKQSLVVLGDHINTFLQHYCRAWEIKHWKKMLWRFVSLFSELEAKQLRKLYKYTKNNQTTKFLMAFCPLDAPESSLLADQEDSLPKLCTAWGLRSHLNGMKERLSKLQAPGHPARLLKELRARGPRRRGSKLPQEPKLKRRRIKEAPDTPETCL</sequence>
<organism>
    <name type="scientific">Bos taurus</name>
    <name type="common">Bovine</name>
    <dbReference type="NCBI Taxonomy" id="9913"/>
    <lineage>
        <taxon>Eukaryota</taxon>
        <taxon>Metazoa</taxon>
        <taxon>Chordata</taxon>
        <taxon>Craniata</taxon>
        <taxon>Vertebrata</taxon>
        <taxon>Euteleostomi</taxon>
        <taxon>Mammalia</taxon>
        <taxon>Eutheria</taxon>
        <taxon>Laurasiatheria</taxon>
        <taxon>Artiodactyla</taxon>
        <taxon>Ruminantia</taxon>
        <taxon>Pecora</taxon>
        <taxon>Bovidae</taxon>
        <taxon>Bovinae</taxon>
        <taxon>Bos</taxon>
    </lineage>
</organism>
<comment type="function">
    <text evidence="2">May play a role in regulation of apoptosis.</text>
</comment>
<comment type="subcellular location">
    <subcellularLocation>
        <location evidence="2">Cytoplasm</location>
    </subcellularLocation>
    <subcellularLocation>
        <location evidence="1">Nucleus</location>
    </subcellularLocation>
    <text evidence="2">Located in the cytoplasm of spermatogonia and spermatocytes.</text>
</comment>
<comment type="domain">
    <text evidence="1">The CHD1 helical C-terminal domain (CHCT) may bind DNA and nucleosomes.</text>
</comment>
<comment type="sequence caution" evidence="4">
    <conflict type="erroneous initiation">
        <sequence resource="EMBL-CDS" id="AAI09988"/>
    </conflict>
    <text>Truncated N-terminus.</text>
</comment>
<proteinExistence type="evidence at transcript level"/>
<keyword id="KW-0963">Cytoplasm</keyword>
<keyword id="KW-0539">Nucleus</keyword>
<keyword id="KW-1185">Reference proteome</keyword>
<name>CHCT1_BOVIN</name>